<proteinExistence type="inferred from homology"/>
<name>ARNB_ECO45</name>
<evidence type="ECO:0000255" key="1">
    <source>
        <dbReference type="HAMAP-Rule" id="MF_01167"/>
    </source>
</evidence>
<evidence type="ECO:0000305" key="2"/>
<reference key="1">
    <citation type="journal article" date="2009" name="PLoS Genet.">
        <title>Organised genome dynamics in the Escherichia coli species results in highly diverse adaptive paths.</title>
        <authorList>
            <person name="Touchon M."/>
            <person name="Hoede C."/>
            <person name="Tenaillon O."/>
            <person name="Barbe V."/>
            <person name="Baeriswyl S."/>
            <person name="Bidet P."/>
            <person name="Bingen E."/>
            <person name="Bonacorsi S."/>
            <person name="Bouchier C."/>
            <person name="Bouvet O."/>
            <person name="Calteau A."/>
            <person name="Chiapello H."/>
            <person name="Clermont O."/>
            <person name="Cruveiller S."/>
            <person name="Danchin A."/>
            <person name="Diard M."/>
            <person name="Dossat C."/>
            <person name="Karoui M.E."/>
            <person name="Frapy E."/>
            <person name="Garry L."/>
            <person name="Ghigo J.M."/>
            <person name="Gilles A.M."/>
            <person name="Johnson J."/>
            <person name="Le Bouguenec C."/>
            <person name="Lescat M."/>
            <person name="Mangenot S."/>
            <person name="Martinez-Jehanne V."/>
            <person name="Matic I."/>
            <person name="Nassif X."/>
            <person name="Oztas S."/>
            <person name="Petit M.A."/>
            <person name="Pichon C."/>
            <person name="Rouy Z."/>
            <person name="Ruf C.S."/>
            <person name="Schneider D."/>
            <person name="Tourret J."/>
            <person name="Vacherie B."/>
            <person name="Vallenet D."/>
            <person name="Medigue C."/>
            <person name="Rocha E.P.C."/>
            <person name="Denamur E."/>
        </authorList>
    </citation>
    <scope>NUCLEOTIDE SEQUENCE [LARGE SCALE GENOMIC DNA]</scope>
    <source>
        <strain>S88 / ExPEC</strain>
    </source>
</reference>
<gene>
    <name evidence="1" type="primary">arnB</name>
    <name type="ordered locus">ECS88_2402</name>
</gene>
<accession>B7MG20</accession>
<protein>
    <recommendedName>
        <fullName evidence="1">UDP-4-amino-4-deoxy-L-arabinose--oxoglutarate aminotransferase</fullName>
        <ecNumber evidence="1">2.6.1.87</ecNumber>
    </recommendedName>
    <alternativeName>
        <fullName evidence="1">UDP-(beta-L-threo-pentapyranosyl-4''-ulose diphosphate) aminotransferase</fullName>
        <shortName evidence="1">UDP-Ara4O aminotransferase</shortName>
    </alternativeName>
    <alternativeName>
        <fullName evidence="1">UDP-4-amino-4-deoxy-L-arabinose aminotransferase</fullName>
    </alternativeName>
</protein>
<keyword id="KW-0032">Aminotransferase</keyword>
<keyword id="KW-0046">Antibiotic resistance</keyword>
<keyword id="KW-0441">Lipid A biosynthesis</keyword>
<keyword id="KW-0444">Lipid biosynthesis</keyword>
<keyword id="KW-0443">Lipid metabolism</keyword>
<keyword id="KW-0448">Lipopolysaccharide biosynthesis</keyword>
<keyword id="KW-0663">Pyridoxal phosphate</keyword>
<keyword id="KW-1185">Reference proteome</keyword>
<keyword id="KW-0808">Transferase</keyword>
<dbReference type="EC" id="2.6.1.87" evidence="1"/>
<dbReference type="EMBL" id="CU928161">
    <property type="protein sequence ID" value="CAR03682.1"/>
    <property type="status" value="ALT_INIT"/>
    <property type="molecule type" value="Genomic_DNA"/>
</dbReference>
<dbReference type="RefSeq" id="WP_011076488.1">
    <property type="nucleotide sequence ID" value="NC_011742.1"/>
</dbReference>
<dbReference type="SMR" id="B7MG20"/>
<dbReference type="KEGG" id="ecz:ECS88_2402"/>
<dbReference type="HOGENOM" id="CLU_033332_0_3_6"/>
<dbReference type="UniPathway" id="UPA00030"/>
<dbReference type="UniPathway" id="UPA00032">
    <property type="reaction ID" value="UER00493"/>
</dbReference>
<dbReference type="Proteomes" id="UP000000747">
    <property type="component" value="Chromosome"/>
</dbReference>
<dbReference type="GO" id="GO:0016020">
    <property type="term" value="C:membrane"/>
    <property type="evidence" value="ECO:0007669"/>
    <property type="project" value="GOC"/>
</dbReference>
<dbReference type="GO" id="GO:0030170">
    <property type="term" value="F:pyridoxal phosphate binding"/>
    <property type="evidence" value="ECO:0007669"/>
    <property type="project" value="TreeGrafter"/>
</dbReference>
<dbReference type="GO" id="GO:0099620">
    <property type="term" value="F:UDP-4-amino-4-deoxy-L-arabinose aminotransferase"/>
    <property type="evidence" value="ECO:0007669"/>
    <property type="project" value="UniProtKB-EC"/>
</dbReference>
<dbReference type="GO" id="GO:0009245">
    <property type="term" value="P:lipid A biosynthetic process"/>
    <property type="evidence" value="ECO:0007669"/>
    <property type="project" value="UniProtKB-KW"/>
</dbReference>
<dbReference type="GO" id="GO:0009103">
    <property type="term" value="P:lipopolysaccharide biosynthetic process"/>
    <property type="evidence" value="ECO:0007669"/>
    <property type="project" value="UniProtKB-UniRule"/>
</dbReference>
<dbReference type="GO" id="GO:0046677">
    <property type="term" value="P:response to antibiotic"/>
    <property type="evidence" value="ECO:0007669"/>
    <property type="project" value="UniProtKB-KW"/>
</dbReference>
<dbReference type="CDD" id="cd00616">
    <property type="entry name" value="AHBA_syn"/>
    <property type="match status" value="1"/>
</dbReference>
<dbReference type="FunFam" id="3.40.640.10:FF:000040">
    <property type="entry name" value="UDP-4-amino-4-deoxy-L-arabinose--oxoglutarate aminotransferase"/>
    <property type="match status" value="1"/>
</dbReference>
<dbReference type="FunFam" id="3.90.1150.10:FF:000030">
    <property type="entry name" value="UDP-4-amino-4-deoxy-L-arabinose--oxoglutarate aminotransferase"/>
    <property type="match status" value="1"/>
</dbReference>
<dbReference type="Gene3D" id="3.90.1150.10">
    <property type="entry name" value="Aspartate Aminotransferase, domain 1"/>
    <property type="match status" value="1"/>
</dbReference>
<dbReference type="Gene3D" id="3.40.640.10">
    <property type="entry name" value="Type I PLP-dependent aspartate aminotransferase-like (Major domain)"/>
    <property type="match status" value="1"/>
</dbReference>
<dbReference type="HAMAP" id="MF_01167">
    <property type="entry name" value="ArnB_transfer"/>
    <property type="match status" value="1"/>
</dbReference>
<dbReference type="InterPro" id="IPR022850">
    <property type="entry name" value="ArnB_NH2Trfase"/>
</dbReference>
<dbReference type="InterPro" id="IPR000653">
    <property type="entry name" value="DegT/StrS_aminotransferase"/>
</dbReference>
<dbReference type="InterPro" id="IPR015424">
    <property type="entry name" value="PyrdxlP-dep_Trfase"/>
</dbReference>
<dbReference type="InterPro" id="IPR015421">
    <property type="entry name" value="PyrdxlP-dep_Trfase_major"/>
</dbReference>
<dbReference type="InterPro" id="IPR015422">
    <property type="entry name" value="PyrdxlP-dep_Trfase_small"/>
</dbReference>
<dbReference type="NCBIfam" id="NF008658">
    <property type="entry name" value="PRK11658.1"/>
    <property type="match status" value="1"/>
</dbReference>
<dbReference type="PANTHER" id="PTHR30244">
    <property type="entry name" value="TRANSAMINASE"/>
    <property type="match status" value="1"/>
</dbReference>
<dbReference type="PANTHER" id="PTHR30244:SF41">
    <property type="entry name" value="UDP-4-AMINO-4-DEOXY-L-ARABINOSE--OXOGLUTARATE AMINOTRANSFERASE"/>
    <property type="match status" value="1"/>
</dbReference>
<dbReference type="Pfam" id="PF01041">
    <property type="entry name" value="DegT_DnrJ_EryC1"/>
    <property type="match status" value="1"/>
</dbReference>
<dbReference type="PIRSF" id="PIRSF000390">
    <property type="entry name" value="PLP_StrS"/>
    <property type="match status" value="1"/>
</dbReference>
<dbReference type="SUPFAM" id="SSF53383">
    <property type="entry name" value="PLP-dependent transferases"/>
    <property type="match status" value="1"/>
</dbReference>
<feature type="chain" id="PRO_0000380523" description="UDP-4-amino-4-deoxy-L-arabinose--oxoglutarate aminotransferase">
    <location>
        <begin position="1"/>
        <end position="379"/>
    </location>
</feature>
<feature type="modified residue" description="N6-(pyridoxal phosphate)lysine" evidence="1">
    <location>
        <position position="182"/>
    </location>
</feature>
<comment type="function">
    <text evidence="1">Catalyzes the conversion of UDP-4-keto-arabinose (UDP-Ara4O) to UDP-4-amino-4-deoxy-L-arabinose (UDP-L-Ara4N). The modified arabinose is attached to lipid A and is required for resistance to polymyxin and cationic antimicrobial peptides.</text>
</comment>
<comment type="catalytic activity">
    <reaction evidence="1">
        <text>UDP-4-amino-4-deoxy-beta-L-arabinose + 2-oxoglutarate = UDP-beta-L-threo-pentopyranos-4-ulose + L-glutamate</text>
        <dbReference type="Rhea" id="RHEA:24710"/>
        <dbReference type="ChEBI" id="CHEBI:16810"/>
        <dbReference type="ChEBI" id="CHEBI:29985"/>
        <dbReference type="ChEBI" id="CHEBI:58708"/>
        <dbReference type="ChEBI" id="CHEBI:58710"/>
        <dbReference type="EC" id="2.6.1.87"/>
    </reaction>
</comment>
<comment type="cofactor">
    <cofactor evidence="1">
        <name>pyridoxal 5'-phosphate</name>
        <dbReference type="ChEBI" id="CHEBI:597326"/>
    </cofactor>
</comment>
<comment type="pathway">
    <text evidence="1">Nucleotide-sugar biosynthesis; UDP-4-deoxy-4-formamido-beta-L-arabinose biosynthesis; UDP-4-deoxy-4-formamido-beta-L-arabinose from UDP-alpha-D-glucuronate: step 2/3.</text>
</comment>
<comment type="pathway">
    <text evidence="1">Bacterial outer membrane biogenesis; lipopolysaccharide biosynthesis.</text>
</comment>
<comment type="subunit">
    <text evidence="1">Homodimer.</text>
</comment>
<comment type="similarity">
    <text evidence="1">Belongs to the DegT/DnrJ/EryC1 family. ArnB subfamily.</text>
</comment>
<comment type="sequence caution" evidence="2">
    <conflict type="erroneous initiation">
        <sequence resource="EMBL-CDS" id="CAR03682"/>
    </conflict>
</comment>
<sequence>MSGFLPFSRPAMGVEELAAVKEVLESGWITTGPKNQALEQAFCQLTGNQHAIAVSSATAGMHITLMALEIGKGDEVITPSLTWVSTLNMISLLGATPVMVDVDRDTLMVTPEAIEAAITPRTKAIIPVHYAGAPADIDAIRAIGERYGIAVIEDAAHAVGTYYKGRHIGAKGTAIFSFHAIKNITCAEGGLIVTDNENLARQLRMLKFHGLGVDAYDRHTWGRAPQAEVLTPGYKYNLTDINAAIALTQLVKLEHLNTRRREIAQQYQQALAALPFQPLSLPAWPHVHAWHLFIIRVDEQRCGISRDALMEALKERGIGTGLHFRAAHTQKYYRERFPTLSLPNTEWNSERICSLPLFPDMTTADADRVITALQQLAGQ</sequence>
<organism>
    <name type="scientific">Escherichia coli O45:K1 (strain S88 / ExPEC)</name>
    <dbReference type="NCBI Taxonomy" id="585035"/>
    <lineage>
        <taxon>Bacteria</taxon>
        <taxon>Pseudomonadati</taxon>
        <taxon>Pseudomonadota</taxon>
        <taxon>Gammaproteobacteria</taxon>
        <taxon>Enterobacterales</taxon>
        <taxon>Enterobacteriaceae</taxon>
        <taxon>Escherichia</taxon>
    </lineage>
</organism>